<organism>
    <name type="scientific">Saccharomyces cerevisiae (strain ATCC 204508 / S288c)</name>
    <name type="common">Baker's yeast</name>
    <dbReference type="NCBI Taxonomy" id="559292"/>
    <lineage>
        <taxon>Eukaryota</taxon>
        <taxon>Fungi</taxon>
        <taxon>Dikarya</taxon>
        <taxon>Ascomycota</taxon>
        <taxon>Saccharomycotina</taxon>
        <taxon>Saccharomycetes</taxon>
        <taxon>Saccharomycetales</taxon>
        <taxon>Saccharomycetaceae</taxon>
        <taxon>Saccharomyces</taxon>
    </lineage>
</organism>
<accession>P34243</accession>
<accession>D6VXR9</accession>
<keyword id="KW-0067">ATP-binding</keyword>
<keyword id="KW-0963">Cytoplasm</keyword>
<keyword id="KW-0903">Direct protein sequencing</keyword>
<keyword id="KW-0347">Helicase</keyword>
<keyword id="KW-0378">Hydrolase</keyword>
<keyword id="KW-0547">Nucleotide-binding</keyword>
<keyword id="KW-0539">Nucleus</keyword>
<keyword id="KW-1185">Reference proteome</keyword>
<name>HCS1_YEAST</name>
<gene>
    <name type="primary">HCS1</name>
    <name type="synonym">DIP1</name>
    <name type="ordered locus">YKL017C</name>
</gene>
<dbReference type="EC" id="3.6.4.12"/>
<dbReference type="EMBL" id="X74152">
    <property type="protein sequence ID" value="CAA52266.1"/>
    <property type="molecule type" value="Genomic_DNA"/>
</dbReference>
<dbReference type="EMBL" id="Z28017">
    <property type="protein sequence ID" value="CAA81852.1"/>
    <property type="molecule type" value="Genomic_DNA"/>
</dbReference>
<dbReference type="EMBL" id="BK006944">
    <property type="protein sequence ID" value="DAA09139.1"/>
    <property type="molecule type" value="Genomic_DNA"/>
</dbReference>
<dbReference type="PIR" id="S34700">
    <property type="entry name" value="S34700"/>
</dbReference>
<dbReference type="RefSeq" id="NP_012908.1">
    <property type="nucleotide sequence ID" value="NM_001179583.1"/>
</dbReference>
<dbReference type="SMR" id="P34243"/>
<dbReference type="BioGRID" id="34115">
    <property type="interactions" value="130"/>
</dbReference>
<dbReference type="DIP" id="DIP-1383N"/>
<dbReference type="FunCoup" id="P34243">
    <property type="interactions" value="639"/>
</dbReference>
<dbReference type="IntAct" id="P34243">
    <property type="interactions" value="3"/>
</dbReference>
<dbReference type="MINT" id="P34243"/>
<dbReference type="STRING" id="4932.YKL017C"/>
<dbReference type="GlyGen" id="P34243">
    <property type="glycosylation" value="1 site"/>
</dbReference>
<dbReference type="iPTMnet" id="P34243"/>
<dbReference type="PaxDb" id="4932-YKL017C"/>
<dbReference type="PeptideAtlas" id="P34243"/>
<dbReference type="EnsemblFungi" id="YKL017C_mRNA">
    <property type="protein sequence ID" value="YKL017C"/>
    <property type="gene ID" value="YKL017C"/>
</dbReference>
<dbReference type="GeneID" id="853852"/>
<dbReference type="KEGG" id="sce:YKL017C"/>
<dbReference type="AGR" id="SGD:S000001500"/>
<dbReference type="SGD" id="S000001500">
    <property type="gene designation" value="HCS1"/>
</dbReference>
<dbReference type="VEuPathDB" id="FungiDB:YKL017C"/>
<dbReference type="eggNOG" id="KOG1803">
    <property type="taxonomic scope" value="Eukaryota"/>
</dbReference>
<dbReference type="GeneTree" id="ENSGT00930000151035"/>
<dbReference type="HOGENOM" id="CLU_001666_8_2_1"/>
<dbReference type="InParanoid" id="P34243"/>
<dbReference type="OMA" id="TIIHGPP"/>
<dbReference type="OrthoDB" id="6513042at2759"/>
<dbReference type="BioCyc" id="YEAST:G3O-31826-MONOMER"/>
<dbReference type="SABIO-RK" id="P34243"/>
<dbReference type="BioGRID-ORCS" id="853852">
    <property type="hits" value="0 hits in 10 CRISPR screens"/>
</dbReference>
<dbReference type="PRO" id="PR:P34243"/>
<dbReference type="Proteomes" id="UP000002311">
    <property type="component" value="Chromosome XI"/>
</dbReference>
<dbReference type="RNAct" id="P34243">
    <property type="molecule type" value="protein"/>
</dbReference>
<dbReference type="GO" id="GO:0005737">
    <property type="term" value="C:cytoplasm"/>
    <property type="evidence" value="ECO:0007669"/>
    <property type="project" value="UniProtKB-SubCell"/>
</dbReference>
<dbReference type="GO" id="GO:0033203">
    <property type="term" value="C:DNA helicase A complex"/>
    <property type="evidence" value="ECO:0000314"/>
    <property type="project" value="SGD"/>
</dbReference>
<dbReference type="GO" id="GO:0043601">
    <property type="term" value="C:nuclear replisome"/>
    <property type="evidence" value="ECO:0000314"/>
    <property type="project" value="SGD"/>
</dbReference>
<dbReference type="GO" id="GO:0043139">
    <property type="term" value="F:5'-3' DNA helicase activity"/>
    <property type="evidence" value="ECO:0000314"/>
    <property type="project" value="SGD"/>
</dbReference>
<dbReference type="GO" id="GO:0005524">
    <property type="term" value="F:ATP binding"/>
    <property type="evidence" value="ECO:0007669"/>
    <property type="project" value="UniProtKB-KW"/>
</dbReference>
<dbReference type="GO" id="GO:0016887">
    <property type="term" value="F:ATP hydrolysis activity"/>
    <property type="evidence" value="ECO:0000250"/>
    <property type="project" value="UniProtKB"/>
</dbReference>
<dbReference type="GO" id="GO:0036121">
    <property type="term" value="F:double-stranded DNA helicase activity"/>
    <property type="evidence" value="ECO:0000250"/>
    <property type="project" value="UniProtKB"/>
</dbReference>
<dbReference type="GO" id="GO:0003723">
    <property type="term" value="F:RNA binding"/>
    <property type="evidence" value="ECO:0007669"/>
    <property type="project" value="InterPro"/>
</dbReference>
<dbReference type="GO" id="GO:0003697">
    <property type="term" value="F:single-stranded DNA binding"/>
    <property type="evidence" value="ECO:0000250"/>
    <property type="project" value="UniProtKB"/>
</dbReference>
<dbReference type="GO" id="GO:0006301">
    <property type="term" value="P:postreplication repair"/>
    <property type="evidence" value="ECO:0000315"/>
    <property type="project" value="SGD"/>
</dbReference>
<dbReference type="CDD" id="cd18044">
    <property type="entry name" value="DEXXQc_SMUBP2"/>
    <property type="match status" value="1"/>
</dbReference>
<dbReference type="CDD" id="cd18808">
    <property type="entry name" value="SF1_C_Upf1"/>
    <property type="match status" value="1"/>
</dbReference>
<dbReference type="FunFam" id="3.40.50.300:FF:001868">
    <property type="entry name" value="DNA helicase A"/>
    <property type="match status" value="1"/>
</dbReference>
<dbReference type="FunFam" id="3.40.50.300:FF:001171">
    <property type="entry name" value="DNA-binding protein SMUBP-2"/>
    <property type="match status" value="1"/>
</dbReference>
<dbReference type="Gene3D" id="2.40.30.270">
    <property type="match status" value="1"/>
</dbReference>
<dbReference type="Gene3D" id="3.40.50.300">
    <property type="entry name" value="P-loop containing nucleotide triphosphate hydrolases"/>
    <property type="match status" value="2"/>
</dbReference>
<dbReference type="InterPro" id="IPR003593">
    <property type="entry name" value="AAA+_ATPase"/>
</dbReference>
<dbReference type="InterPro" id="IPR050534">
    <property type="entry name" value="Coronavir_polyprotein_1ab"/>
</dbReference>
<dbReference type="InterPro" id="IPR041679">
    <property type="entry name" value="DNA2/NAM7-like_C"/>
</dbReference>
<dbReference type="InterPro" id="IPR041677">
    <property type="entry name" value="DNA2/NAM7_AAA_11"/>
</dbReference>
<dbReference type="InterPro" id="IPR027417">
    <property type="entry name" value="P-loop_NTPase"/>
</dbReference>
<dbReference type="InterPro" id="IPR047187">
    <property type="entry name" value="SF1_C_Upf1"/>
</dbReference>
<dbReference type="InterPro" id="IPR004483">
    <property type="entry name" value="SMUBP-2/Hcs1-like"/>
</dbReference>
<dbReference type="InterPro" id="IPR048761">
    <property type="entry name" value="SMUBP-2_HCS1_1B"/>
</dbReference>
<dbReference type="NCBIfam" id="TIGR00376">
    <property type="entry name" value="IGHMBP2 family helicase"/>
    <property type="match status" value="1"/>
</dbReference>
<dbReference type="PANTHER" id="PTHR43788:SF8">
    <property type="entry name" value="DNA-BINDING PROTEIN SMUBP-2"/>
    <property type="match status" value="1"/>
</dbReference>
<dbReference type="PANTHER" id="PTHR43788">
    <property type="entry name" value="DNA2/NAM7 HELICASE FAMILY MEMBER"/>
    <property type="match status" value="1"/>
</dbReference>
<dbReference type="Pfam" id="PF13086">
    <property type="entry name" value="AAA_11"/>
    <property type="match status" value="1"/>
</dbReference>
<dbReference type="Pfam" id="PF13087">
    <property type="entry name" value="AAA_12"/>
    <property type="match status" value="1"/>
</dbReference>
<dbReference type="Pfam" id="PF21138">
    <property type="entry name" value="SMUBP-2_HCS1_1B"/>
    <property type="match status" value="1"/>
</dbReference>
<dbReference type="SMART" id="SM00382">
    <property type="entry name" value="AAA"/>
    <property type="match status" value="1"/>
</dbReference>
<dbReference type="SUPFAM" id="SSF52540">
    <property type="entry name" value="P-loop containing nucleoside triphosphate hydrolases"/>
    <property type="match status" value="1"/>
</dbReference>
<sequence>MNKELASKFLSSIKHEREQDIQTTSRLLTTLSIQQLVQNGLAINNIHLENIRSGLIGKLYMELGPNLAVNDKIQRGDIKVGDIVLVRPAKTKVNTKTKPKVKKVSEDSNGEQAECSGVVYKMSDTQITIALEESQDVIATTFYSYSKLYILKTTNVVTYNRMESTMRKLSEISSPIQDKIIQYLVNERPFIPNTNSFQNIKSFLNPNLNDSQKTAINFAINNDLTIIHGPPGTGKTFTLIELIQQLLIKNPEERILICGPSNISVDTILERLTPLVPNNLLLRIGHPARLLDSNKRHSLDILSKKNTIVKDISQEIDKLIQENKKLKNYKQRKENWNEIKLLRKDLKKREFKTIKDLIIQSRIVVTTLHGSSSRELCSLYRDDPNFQLFDTLIIDEVSQAMEPQCWIPLIAHQNQFHKLVLAGDNKQLPPTIKTEDDKNVIHNLETTLFDRIIKIFPKRDMVKFLNVQYRMNQKIMEFPSHSMYNGKLLADATVANRLLIDLPTVDATPSEDDDDTKIPLIWYDTQGDEFQETADEATILGSKYNEGEIAIVKEHIENLRSFNVPENSIGVISPYNAQVSHLKKLIHDELKLTDIEISTVDGFQGREKDVIILSLVRSNEKFEVGFLKEERRLNVAMTRPRRQLVVVGNIEVLQRCGNKYLKSWSEWCEENADVRYPNIDDYL</sequence>
<evidence type="ECO:0000255" key="1"/>
<evidence type="ECO:0000269" key="2">
    <source>
    </source>
</evidence>
<evidence type="ECO:0000269" key="3">
    <source>
    </source>
</evidence>
<evidence type="ECO:0000269" key="4">
    <source>
    </source>
</evidence>
<evidence type="ECO:0000269" key="5">
    <source>
    </source>
</evidence>
<evidence type="ECO:0000269" key="6">
    <source>
    </source>
</evidence>
<evidence type="ECO:0000269" key="7">
    <source>
    </source>
</evidence>
<evidence type="ECO:0000269" key="8">
    <source>
    </source>
</evidence>
<evidence type="ECO:0000269" key="9">
    <source>
    </source>
</evidence>
<evidence type="ECO:0000305" key="10"/>
<evidence type="ECO:0000305" key="11">
    <source>
    </source>
</evidence>
<reference key="1">
    <citation type="journal article" date="1993" name="Yeast">
        <title>Sequencing and analysis of 51.6 kilobases on the left arm of chromosome XI from Saccharomyces cerevisiae reveals 23 open reading frames including the FAS1 gene.</title>
        <authorList>
            <person name="Wiemann S."/>
            <person name="Voss H."/>
            <person name="Schwager C."/>
            <person name="Rupp T."/>
            <person name="Stegemann J."/>
            <person name="Zimmermann J."/>
            <person name="Grothues D."/>
            <person name="Sensen C."/>
            <person name="Erfle H."/>
            <person name="Hewitt N."/>
            <person name="Banrevi A."/>
            <person name="Ansorge W."/>
        </authorList>
    </citation>
    <scope>NUCLEOTIDE SEQUENCE [GENOMIC DNA]</scope>
</reference>
<reference key="2">
    <citation type="journal article" date="1994" name="Nature">
        <title>Complete DNA sequence of yeast chromosome XI.</title>
        <authorList>
            <person name="Dujon B."/>
            <person name="Alexandraki D."/>
            <person name="Andre B."/>
            <person name="Ansorge W."/>
            <person name="Baladron V."/>
            <person name="Ballesta J.P.G."/>
            <person name="Banrevi A."/>
            <person name="Bolle P.-A."/>
            <person name="Bolotin-Fukuhara M."/>
            <person name="Bossier P."/>
            <person name="Bou G."/>
            <person name="Boyer J."/>
            <person name="Buitrago M.J."/>
            <person name="Cheret G."/>
            <person name="Colleaux L."/>
            <person name="Daignan-Fornier B."/>
            <person name="del Rey F."/>
            <person name="Dion C."/>
            <person name="Domdey H."/>
            <person name="Duesterhoeft A."/>
            <person name="Duesterhus S."/>
            <person name="Entian K.-D."/>
            <person name="Erfle H."/>
            <person name="Esteban P.F."/>
            <person name="Feldmann H."/>
            <person name="Fernandes L."/>
            <person name="Fobo G.M."/>
            <person name="Fritz C."/>
            <person name="Fukuhara H."/>
            <person name="Gabel C."/>
            <person name="Gaillon L."/>
            <person name="Garcia-Cantalejo J.M."/>
            <person name="Garcia-Ramirez J.J."/>
            <person name="Gent M.E."/>
            <person name="Ghazvini M."/>
            <person name="Goffeau A."/>
            <person name="Gonzalez A."/>
            <person name="Grothues D."/>
            <person name="Guerreiro P."/>
            <person name="Hegemann J.H."/>
            <person name="Hewitt N."/>
            <person name="Hilger F."/>
            <person name="Hollenberg C.P."/>
            <person name="Horaitis O."/>
            <person name="Indge K.J."/>
            <person name="Jacquier A."/>
            <person name="James C.M."/>
            <person name="Jauniaux J.-C."/>
            <person name="Jimenez A."/>
            <person name="Keuchel H."/>
            <person name="Kirchrath L."/>
            <person name="Kleine K."/>
            <person name="Koetter P."/>
            <person name="Legrain P."/>
            <person name="Liebl S."/>
            <person name="Louis E.J."/>
            <person name="Maia e Silva A."/>
            <person name="Marck C."/>
            <person name="Monnier A.-L."/>
            <person name="Moestl D."/>
            <person name="Mueller S."/>
            <person name="Obermaier B."/>
            <person name="Oliver S.G."/>
            <person name="Pallier C."/>
            <person name="Pascolo S."/>
            <person name="Pfeiffer F."/>
            <person name="Philippsen P."/>
            <person name="Planta R.J."/>
            <person name="Pohl F.M."/>
            <person name="Pohl T.M."/>
            <person name="Poehlmann R."/>
            <person name="Portetelle D."/>
            <person name="Purnelle B."/>
            <person name="Puzos V."/>
            <person name="Ramezani Rad M."/>
            <person name="Rasmussen S.W."/>
            <person name="Remacha M.A."/>
            <person name="Revuelta J.L."/>
            <person name="Richard G.-F."/>
            <person name="Rieger M."/>
            <person name="Rodrigues-Pousada C."/>
            <person name="Rose M."/>
            <person name="Rupp T."/>
            <person name="Santos M.A."/>
            <person name="Schwager C."/>
            <person name="Sensen C."/>
            <person name="Skala J."/>
            <person name="Soares H."/>
            <person name="Sor F."/>
            <person name="Stegemann J."/>
            <person name="Tettelin H."/>
            <person name="Thierry A."/>
            <person name="Tzermia M."/>
            <person name="Urrestarazu L.A."/>
            <person name="van Dyck L."/>
            <person name="van Vliet-Reedijk J.C."/>
            <person name="Valens M."/>
            <person name="Vandenbol M."/>
            <person name="Vilela C."/>
            <person name="Vissers S."/>
            <person name="von Wettstein D."/>
            <person name="Voss H."/>
            <person name="Wiemann S."/>
            <person name="Xu G."/>
            <person name="Zimmermann J."/>
            <person name="Haasemann M."/>
            <person name="Becker I."/>
            <person name="Mewes H.-W."/>
        </authorList>
    </citation>
    <scope>NUCLEOTIDE SEQUENCE [LARGE SCALE GENOMIC DNA]</scope>
    <source>
        <strain>ATCC 204508 / S288c</strain>
    </source>
</reference>
<reference key="3">
    <citation type="journal article" date="2014" name="G3 (Bethesda)">
        <title>The reference genome sequence of Saccharomyces cerevisiae: Then and now.</title>
        <authorList>
            <person name="Engel S.R."/>
            <person name="Dietrich F.S."/>
            <person name="Fisk D.G."/>
            <person name="Binkley G."/>
            <person name="Balakrishnan R."/>
            <person name="Costanzo M.C."/>
            <person name="Dwight S.S."/>
            <person name="Hitz B.C."/>
            <person name="Karra K."/>
            <person name="Nash R.S."/>
            <person name="Weng S."/>
            <person name="Wong E.D."/>
            <person name="Lloyd P."/>
            <person name="Skrzypek M.S."/>
            <person name="Miyasato S.R."/>
            <person name="Simison M."/>
            <person name="Cherry J.M."/>
        </authorList>
    </citation>
    <scope>GENOME REANNOTATION</scope>
    <source>
        <strain>ATCC 204508 / S288c</strain>
    </source>
</reference>
<reference key="4">
    <citation type="journal article" date="1997" name="Biochemistry">
        <title>Purification and characterization of DNA polymerase alpha-associated replication protein A-dependent yeast DNA helicase A.</title>
        <authorList>
            <person name="Biswas S.B."/>
            <person name="Chen P.H."/>
            <person name="Biswas E.E."/>
        </authorList>
    </citation>
    <scope>PROTEIN SEQUENCE OF 9-22</scope>
    <scope>FUNCTION</scope>
    <scope>BIOPHYSICOCHEMICAL PROPERTIES</scope>
</reference>
<reference key="5">
    <citation type="journal article" date="1993" name="Biochemistry">
        <title>Purification and characterization of a yeast DNA polymerase alpha complex with associated primase, 5'--&gt;3' exonuclease, and DNA-dependent ATPase activities.</title>
        <authorList>
            <person name="Biswas E.E."/>
            <person name="Chen P.H."/>
            <person name="Gray W."/>
            <person name="Li Y.H."/>
            <person name="Ray S."/>
            <person name="Biswas S.B."/>
        </authorList>
    </citation>
    <scope>FUNCTION</scope>
    <scope>ASSOCIATION WITH DNA POLYMERASE ALPHA</scope>
</reference>
<reference key="6">
    <citation type="journal article" date="1993" name="Biochemistry">
        <title>Characterization of the DNA-dependent ATPase and a DNA unwinding activity associated with the yeast DNA polymerase alpha complex.</title>
        <authorList>
            <person name="Biswas E.E."/>
            <person name="Ewing C.M."/>
            <person name="Biswas S.B."/>
        </authorList>
    </citation>
    <scope>FUNCTION</scope>
    <scope>ASSOCIATION WITH DNA POLYMERASE ALPHA</scope>
</reference>
<reference key="7">
    <citation type="journal article" date="1993" name="Biochemistry">
        <title>DNA helicase associated with DNA polymerase alpha: isolation by a modified immunoaffinity chromatography.</title>
        <authorList>
            <person name="Biswas E.E."/>
            <person name="Chen P.H."/>
            <person name="Biswas S.B."/>
        </authorList>
    </citation>
    <scope>FUNCTION</scope>
    <scope>ASSOCIATION WITH DNA POLYMERASE ALPHA</scope>
</reference>
<reference key="8">
    <citation type="journal article" date="1997" name="Biochemistry">
        <title>Yeast DNA helicase A: cloning, expression, purification, and enzymatic characterization.</title>
        <authorList>
            <person name="Biswas E.E."/>
            <person name="Fricke W.M."/>
            <person name="Chen P.H."/>
            <person name="Biswas S.B."/>
        </authorList>
    </citation>
    <scope>FUNCTION</scope>
    <scope>BIOPHYSICOCHEMICAL PROPERTIES</scope>
</reference>
<reference key="9">
    <citation type="journal article" date="1999" name="Yeast">
        <title>Systematic identification, classification, and characterization of the open reading frames which encode novel helicase-related proteins in Saccharomyces cerevisiae by gene disruption and Northern analysis.</title>
        <authorList>
            <person name="Shiratori A."/>
            <person name="Shibata T."/>
            <person name="Arisawa M."/>
            <person name="Hanaoka F."/>
            <person name="Murakami Y."/>
            <person name="Eki T."/>
        </authorList>
    </citation>
    <scope>INDUCTION</scope>
</reference>
<reference key="10">
    <citation type="journal article" date="2003" name="Nature">
        <title>Global analysis of protein localization in budding yeast.</title>
        <authorList>
            <person name="Huh W.-K."/>
            <person name="Falvo J.V."/>
            <person name="Gerke L.C."/>
            <person name="Carroll A.S."/>
            <person name="Howson R.W."/>
            <person name="Weissman J.S."/>
            <person name="O'Shea E.K."/>
        </authorList>
    </citation>
    <scope>SUBCELLULAR LOCATION [LARGE SCALE ANALYSIS]</scope>
</reference>
<reference key="11">
    <citation type="journal article" date="2003" name="Nature">
        <title>Global analysis of protein expression in yeast.</title>
        <authorList>
            <person name="Ghaemmaghami S."/>
            <person name="Huh W.-K."/>
            <person name="Bower K."/>
            <person name="Howson R.W."/>
            <person name="Belle A."/>
            <person name="Dephoure N."/>
            <person name="O'Shea E.K."/>
            <person name="Weissman J.S."/>
        </authorList>
    </citation>
    <scope>LEVEL OF PROTEIN EXPRESSION [LARGE SCALE ANALYSIS]</scope>
</reference>
<proteinExistence type="evidence at protein level"/>
<feature type="chain" id="PRO_0000080726" description="DNA polymerase alpha-associated DNA helicase A">
    <location>
        <begin position="1"/>
        <end position="683"/>
    </location>
</feature>
<feature type="binding site" evidence="1">
    <location>
        <begin position="229"/>
        <end position="236"/>
    </location>
    <ligand>
        <name>ATP</name>
        <dbReference type="ChEBI" id="CHEBI:30616"/>
    </ligand>
</feature>
<protein>
    <recommendedName>
        <fullName>DNA polymerase alpha-associated DNA helicase A</fullName>
        <ecNumber>3.6.4.12</ecNumber>
    </recommendedName>
</protein>
<comment type="function">
    <text evidence="5 6 7 8 9">DNA polymerase alpha-associated DNA helicase which may be involved in DNA replication.</text>
</comment>
<comment type="catalytic activity">
    <reaction>
        <text>ATP + H2O = ADP + phosphate + H(+)</text>
        <dbReference type="Rhea" id="RHEA:13065"/>
        <dbReference type="ChEBI" id="CHEBI:15377"/>
        <dbReference type="ChEBI" id="CHEBI:15378"/>
        <dbReference type="ChEBI" id="CHEBI:30616"/>
        <dbReference type="ChEBI" id="CHEBI:43474"/>
        <dbReference type="ChEBI" id="CHEBI:456216"/>
        <dbReference type="EC" id="3.6.4.12"/>
    </reaction>
</comment>
<comment type="biophysicochemical properties">
    <kinetics>
        <KM evidence="8 9">90 uM for ATP</KM>
        <Vmax evidence="8 9">14.0 umol/min/mg enzyme</Vmax>
    </kinetics>
</comment>
<comment type="subunit">
    <text>Associates with the hexameric DNA polymerase alpha.</text>
</comment>
<comment type="subcellular location">
    <subcellularLocation>
        <location evidence="3">Cytoplasm</location>
    </subcellularLocation>
    <subcellularLocation>
        <location evidence="11">Nucleus</location>
    </subcellularLocation>
</comment>
<comment type="induction">
    <text evidence="2">By heat shock.</text>
</comment>
<comment type="miscellaneous">
    <text evidence="4">Present with 1040 molecules/cell in log phase SD medium.</text>
</comment>
<comment type="similarity">
    <text evidence="10">Belongs to the DNA2/NAM7 helicase family.</text>
</comment>